<comment type="function">
    <text evidence="1">May be involved in the conjugation of reduced glutathione to a wide number of exogenous and endogenous hydrophobic electrophiles and have a detoxification role against certain herbicides.</text>
</comment>
<comment type="catalytic activity">
    <reaction evidence="1">
        <text>RX + glutathione = an S-substituted glutathione + a halide anion + H(+)</text>
        <dbReference type="Rhea" id="RHEA:16437"/>
        <dbReference type="ChEBI" id="CHEBI:15378"/>
        <dbReference type="ChEBI" id="CHEBI:16042"/>
        <dbReference type="ChEBI" id="CHEBI:17792"/>
        <dbReference type="ChEBI" id="CHEBI:57925"/>
        <dbReference type="ChEBI" id="CHEBI:90779"/>
        <dbReference type="EC" id="2.5.1.18"/>
    </reaction>
</comment>
<comment type="subcellular location">
    <subcellularLocation>
        <location evidence="7">Cytoplasm</location>
        <location evidence="7">Cytosol</location>
    </subcellularLocation>
</comment>
<comment type="induction">
    <text evidence="3 4 5">By ethylene, salicylic acid, copper and the bacterial pathogen P.syringae.</text>
</comment>
<comment type="similarity">
    <text evidence="7">Belongs to the GST superfamily. Phi family.</text>
</comment>
<accession>Q9SRY5</accession>
<accession>O23720</accession>
<accession>Q541C6</accession>
<keyword id="KW-0963">Cytoplasm</keyword>
<keyword id="KW-0216">Detoxification</keyword>
<keyword id="KW-1185">Reference proteome</keyword>
<keyword id="KW-0346">Stress response</keyword>
<keyword id="KW-0808">Transferase</keyword>
<gene>
    <name evidence="6" type="primary">GSTF7</name>
    <name evidence="6" type="synonym">GST11</name>
    <name evidence="6" type="synonym">GSTF8</name>
    <name evidence="8" type="ordered locus">At1g02920</name>
    <name evidence="9" type="ORF">F22D16.8</name>
</gene>
<evidence type="ECO:0000250" key="1">
    <source>
        <dbReference type="UniProtKB" id="O80852"/>
    </source>
</evidence>
<evidence type="ECO:0000255" key="2"/>
<evidence type="ECO:0000269" key="3">
    <source>
    </source>
</evidence>
<evidence type="ECO:0000269" key="4">
    <source>
    </source>
</evidence>
<evidence type="ECO:0000269" key="5">
    <source>
    </source>
</evidence>
<evidence type="ECO:0000303" key="6">
    <source>
    </source>
</evidence>
<evidence type="ECO:0000305" key="7"/>
<evidence type="ECO:0000312" key="8">
    <source>
        <dbReference type="Araport" id="AT1G02920"/>
    </source>
</evidence>
<evidence type="ECO:0000312" key="9">
    <source>
        <dbReference type="EMBL" id="AAF02874.1"/>
    </source>
</evidence>
<feature type="chain" id="PRO_0000185852" description="Glutathione S-transferase F7">
    <location>
        <begin position="1"/>
        <end position="209"/>
    </location>
</feature>
<feature type="domain" description="GST N-terminal" evidence="2">
    <location>
        <begin position="2"/>
        <end position="83"/>
    </location>
</feature>
<feature type="domain" description="GST C-terminal" evidence="2">
    <location>
        <begin position="90"/>
        <end position="209"/>
    </location>
</feature>
<feature type="binding site" evidence="1">
    <location>
        <begin position="12"/>
        <end position="13"/>
    </location>
    <ligand>
        <name>glutathione</name>
        <dbReference type="ChEBI" id="CHEBI:57925"/>
    </ligand>
</feature>
<feature type="binding site" evidence="1">
    <location>
        <begin position="41"/>
        <end position="42"/>
    </location>
    <ligand>
        <name>glutathione</name>
        <dbReference type="ChEBI" id="CHEBI:57925"/>
    </ligand>
</feature>
<feature type="binding site" evidence="1">
    <location>
        <begin position="54"/>
        <end position="55"/>
    </location>
    <ligand>
        <name>glutathione</name>
        <dbReference type="ChEBI" id="CHEBI:57925"/>
    </ligand>
</feature>
<feature type="binding site" evidence="1">
    <location>
        <begin position="67"/>
        <end position="68"/>
    </location>
    <ligand>
        <name>glutathione</name>
        <dbReference type="ChEBI" id="CHEBI:57925"/>
    </ligand>
</feature>
<feature type="sequence conflict" description="In Ref. 1; CAA74639 and 2; AAG30126." evidence="7" ref="1 2">
    <original>D</original>
    <variation>A</variation>
    <location>
        <position position="187"/>
    </location>
</feature>
<reference key="1">
    <citation type="submission" date="1997-07" db="EMBL/GenBank/DDBJ databases">
        <title>Characterization of a novel glutathione S-transferase gene in Arabidopsis thaliana.</title>
        <authorList>
            <person name="Yang K.Y."/>
            <person name="Kim C.S."/>
            <person name="Kim K.C."/>
            <person name="Cho B.-H."/>
        </authorList>
    </citation>
    <scope>NUCLEOTIDE SEQUENCE [GENOMIC DNA]</scope>
    <source>
        <strain>cv. Landsberg erecta</strain>
    </source>
</reference>
<reference key="2">
    <citation type="journal article" date="2002" name="Plant Mol. Biol.">
        <title>Probing the diversity of the Arabidopsis glutathione S-transferase gene family.</title>
        <authorList>
            <person name="Wagner U."/>
            <person name="Edwards R."/>
            <person name="Dixon D.P."/>
            <person name="Mauch F."/>
        </authorList>
    </citation>
    <scope>NUCLEOTIDE SEQUENCE [MRNA]</scope>
    <scope>INDUCTION</scope>
    <scope>GENE FAMILY</scope>
    <scope>NOMENCLATURE</scope>
    <source>
        <strain>cv. Columbia</strain>
    </source>
</reference>
<reference key="3">
    <citation type="journal article" date="2000" name="Nature">
        <title>Sequence and analysis of chromosome 1 of the plant Arabidopsis thaliana.</title>
        <authorList>
            <person name="Theologis A."/>
            <person name="Ecker J.R."/>
            <person name="Palm C.J."/>
            <person name="Federspiel N.A."/>
            <person name="Kaul S."/>
            <person name="White O."/>
            <person name="Alonso J."/>
            <person name="Altafi H."/>
            <person name="Araujo R."/>
            <person name="Bowman C.L."/>
            <person name="Brooks S.Y."/>
            <person name="Buehler E."/>
            <person name="Chan A."/>
            <person name="Chao Q."/>
            <person name="Chen H."/>
            <person name="Cheuk R.F."/>
            <person name="Chin C.W."/>
            <person name="Chung M.K."/>
            <person name="Conn L."/>
            <person name="Conway A.B."/>
            <person name="Conway A.R."/>
            <person name="Creasy T.H."/>
            <person name="Dewar K."/>
            <person name="Dunn P."/>
            <person name="Etgu P."/>
            <person name="Feldblyum T.V."/>
            <person name="Feng J.-D."/>
            <person name="Fong B."/>
            <person name="Fujii C.Y."/>
            <person name="Gill J.E."/>
            <person name="Goldsmith A.D."/>
            <person name="Haas B."/>
            <person name="Hansen N.F."/>
            <person name="Hughes B."/>
            <person name="Huizar L."/>
            <person name="Hunter J.L."/>
            <person name="Jenkins J."/>
            <person name="Johnson-Hopson C."/>
            <person name="Khan S."/>
            <person name="Khaykin E."/>
            <person name="Kim C.J."/>
            <person name="Koo H.L."/>
            <person name="Kremenetskaia I."/>
            <person name="Kurtz D.B."/>
            <person name="Kwan A."/>
            <person name="Lam B."/>
            <person name="Langin-Hooper S."/>
            <person name="Lee A."/>
            <person name="Lee J.M."/>
            <person name="Lenz C.A."/>
            <person name="Li J.H."/>
            <person name="Li Y.-P."/>
            <person name="Lin X."/>
            <person name="Liu S.X."/>
            <person name="Liu Z.A."/>
            <person name="Luros J.S."/>
            <person name="Maiti R."/>
            <person name="Marziali A."/>
            <person name="Militscher J."/>
            <person name="Miranda M."/>
            <person name="Nguyen M."/>
            <person name="Nierman W.C."/>
            <person name="Osborne B.I."/>
            <person name="Pai G."/>
            <person name="Peterson J."/>
            <person name="Pham P.K."/>
            <person name="Rizzo M."/>
            <person name="Rooney T."/>
            <person name="Rowley D."/>
            <person name="Sakano H."/>
            <person name="Salzberg S.L."/>
            <person name="Schwartz J.R."/>
            <person name="Shinn P."/>
            <person name="Southwick A.M."/>
            <person name="Sun H."/>
            <person name="Tallon L.J."/>
            <person name="Tambunga G."/>
            <person name="Toriumi M.J."/>
            <person name="Town C.D."/>
            <person name="Utterback T."/>
            <person name="Van Aken S."/>
            <person name="Vaysberg M."/>
            <person name="Vysotskaia V.S."/>
            <person name="Walker M."/>
            <person name="Wu D."/>
            <person name="Yu G."/>
            <person name="Fraser C.M."/>
            <person name="Venter J.C."/>
            <person name="Davis R.W."/>
        </authorList>
    </citation>
    <scope>NUCLEOTIDE SEQUENCE [LARGE SCALE GENOMIC DNA]</scope>
    <source>
        <strain>cv. Columbia</strain>
    </source>
</reference>
<reference key="4">
    <citation type="journal article" date="2017" name="Plant J.">
        <title>Araport11: a complete reannotation of the Arabidopsis thaliana reference genome.</title>
        <authorList>
            <person name="Cheng C.Y."/>
            <person name="Krishnakumar V."/>
            <person name="Chan A.P."/>
            <person name="Thibaud-Nissen F."/>
            <person name="Schobel S."/>
            <person name="Town C.D."/>
        </authorList>
    </citation>
    <scope>GENOME REANNOTATION</scope>
    <source>
        <strain>cv. Columbia</strain>
    </source>
</reference>
<reference key="5">
    <citation type="journal article" date="2003" name="Science">
        <title>Empirical analysis of transcriptional activity in the Arabidopsis genome.</title>
        <authorList>
            <person name="Yamada K."/>
            <person name="Lim J."/>
            <person name="Dale J.M."/>
            <person name="Chen H."/>
            <person name="Shinn P."/>
            <person name="Palm C.J."/>
            <person name="Southwick A.M."/>
            <person name="Wu H.C."/>
            <person name="Kim C.J."/>
            <person name="Nguyen M."/>
            <person name="Pham P.K."/>
            <person name="Cheuk R.F."/>
            <person name="Karlin-Newmann G."/>
            <person name="Liu S.X."/>
            <person name="Lam B."/>
            <person name="Sakano H."/>
            <person name="Wu T."/>
            <person name="Yu G."/>
            <person name="Miranda M."/>
            <person name="Quach H.L."/>
            <person name="Tripp M."/>
            <person name="Chang C.H."/>
            <person name="Lee J.M."/>
            <person name="Toriumi M.J."/>
            <person name="Chan M.M."/>
            <person name="Tang C.C."/>
            <person name="Onodera C.S."/>
            <person name="Deng J.M."/>
            <person name="Akiyama K."/>
            <person name="Ansari Y."/>
            <person name="Arakawa T."/>
            <person name="Banh J."/>
            <person name="Banno F."/>
            <person name="Bowser L."/>
            <person name="Brooks S.Y."/>
            <person name="Carninci P."/>
            <person name="Chao Q."/>
            <person name="Choy N."/>
            <person name="Enju A."/>
            <person name="Goldsmith A.D."/>
            <person name="Gurjal M."/>
            <person name="Hansen N.F."/>
            <person name="Hayashizaki Y."/>
            <person name="Johnson-Hopson C."/>
            <person name="Hsuan V.W."/>
            <person name="Iida K."/>
            <person name="Karnes M."/>
            <person name="Khan S."/>
            <person name="Koesema E."/>
            <person name="Ishida J."/>
            <person name="Jiang P.X."/>
            <person name="Jones T."/>
            <person name="Kawai J."/>
            <person name="Kamiya A."/>
            <person name="Meyers C."/>
            <person name="Nakajima M."/>
            <person name="Narusaka M."/>
            <person name="Seki M."/>
            <person name="Sakurai T."/>
            <person name="Satou M."/>
            <person name="Tamse R."/>
            <person name="Vaysberg M."/>
            <person name="Wallender E.K."/>
            <person name="Wong C."/>
            <person name="Yamamura Y."/>
            <person name="Yuan S."/>
            <person name="Shinozaki K."/>
            <person name="Davis R.W."/>
            <person name="Theologis A."/>
            <person name="Ecker J.R."/>
        </authorList>
    </citation>
    <scope>NUCLEOTIDE SEQUENCE [LARGE SCALE MRNA]</scope>
    <source>
        <strain>cv. Columbia</strain>
    </source>
</reference>
<reference key="6">
    <citation type="journal article" date="2003" name="Plant Cell Physiol.">
        <title>The rapid induction of glutathione S-transferases AtGSTF2 and AtGSTF6 by avirulent Pseudomonas syringae is the result of combined salicylic acid and ethylene signaling.</title>
        <authorList>
            <person name="Lieberherr D."/>
            <person name="Wagner U."/>
            <person name="Dubuis P.H."/>
            <person name="Metraux J.P."/>
            <person name="Mauch F."/>
        </authorList>
    </citation>
    <scope>INDUCTION</scope>
</reference>
<reference key="7">
    <citation type="journal article" date="2004" name="J. Biol. Chem.">
        <title>Proteomic analysis of Arabidopsis glutathione S-transferases from benoxacor- and copper-treated seedlings.</title>
        <authorList>
            <person name="Smith A.P."/>
            <person name="DeRidder B.P."/>
            <person name="Guo W.J."/>
            <person name="Seeley E.H."/>
            <person name="Regnier F.E."/>
            <person name="Goldsbrough P.B."/>
        </authorList>
    </citation>
    <scope>INDUCTION BY COPPER</scope>
</reference>
<sequence>MAGIKVFGHPASTATRRVLIALHEKNLDFEFVHIELKDGEHKKEPFIFRNPFGKVPAFEDGDFKLFESRAITQYIAHFYSDKGNQLVSLGSKDIAGIAMGIEIESHEFDPVGSKLVWEQVLKPLYGMTTDKTVVEEEEAKLAKVLDVYEHRLGESKYLASDKFTLVDLHTIPVIQYLLGTPTKKLFDERPHVSAWVADITSRPSAKKVL</sequence>
<proteinExistence type="evidence at transcript level"/>
<protein>
    <recommendedName>
        <fullName evidence="6">Glutathione S-transferase F7</fullName>
        <ecNumber evidence="1">2.5.1.18</ecNumber>
    </recommendedName>
    <alternativeName>
        <fullName evidence="6">AtGSTF8</fullName>
    </alternativeName>
    <alternativeName>
        <fullName evidence="6">GST class-phi member 7</fullName>
    </alternativeName>
    <alternativeName>
        <fullName evidence="6">Glutathione S-transferase 11</fullName>
    </alternativeName>
</protein>
<organism>
    <name type="scientific">Arabidopsis thaliana</name>
    <name type="common">Mouse-ear cress</name>
    <dbReference type="NCBI Taxonomy" id="3702"/>
    <lineage>
        <taxon>Eukaryota</taxon>
        <taxon>Viridiplantae</taxon>
        <taxon>Streptophyta</taxon>
        <taxon>Embryophyta</taxon>
        <taxon>Tracheophyta</taxon>
        <taxon>Spermatophyta</taxon>
        <taxon>Magnoliopsida</taxon>
        <taxon>eudicotyledons</taxon>
        <taxon>Gunneridae</taxon>
        <taxon>Pentapetalae</taxon>
        <taxon>rosids</taxon>
        <taxon>malvids</taxon>
        <taxon>Brassicales</taxon>
        <taxon>Brassicaceae</taxon>
        <taxon>Camelineae</taxon>
        <taxon>Arabidopsis</taxon>
    </lineage>
</organism>
<name>GSTF7_ARATH</name>
<dbReference type="EC" id="2.5.1.18" evidence="1"/>
<dbReference type="EMBL" id="Y14251">
    <property type="protein sequence ID" value="CAA74639.1"/>
    <property type="molecule type" value="Genomic_DNA"/>
</dbReference>
<dbReference type="EMBL" id="AF288177">
    <property type="protein sequence ID" value="AAG30126.1"/>
    <property type="molecule type" value="mRNA"/>
</dbReference>
<dbReference type="EMBL" id="AC009525">
    <property type="protein sequence ID" value="AAF02874.1"/>
    <property type="molecule type" value="Genomic_DNA"/>
</dbReference>
<dbReference type="EMBL" id="CP002684">
    <property type="protein sequence ID" value="AEE27496.1"/>
    <property type="molecule type" value="Genomic_DNA"/>
</dbReference>
<dbReference type="EMBL" id="AY062642">
    <property type="protein sequence ID" value="AAL32720.1"/>
    <property type="molecule type" value="mRNA"/>
</dbReference>
<dbReference type="EMBL" id="AY093281">
    <property type="protein sequence ID" value="AAM13280.1"/>
    <property type="molecule type" value="mRNA"/>
</dbReference>
<dbReference type="PIR" id="F86159">
    <property type="entry name" value="F86159"/>
</dbReference>
<dbReference type="RefSeq" id="NP_171791.1">
    <property type="nucleotide sequence ID" value="NM_100173.4"/>
</dbReference>
<dbReference type="SMR" id="Q9SRY5"/>
<dbReference type="BioGRID" id="24530">
    <property type="interactions" value="1"/>
</dbReference>
<dbReference type="FunCoup" id="Q9SRY5">
    <property type="interactions" value="1050"/>
</dbReference>
<dbReference type="IntAct" id="Q9SRY5">
    <property type="interactions" value="2"/>
</dbReference>
<dbReference type="STRING" id="3702.Q9SRY5"/>
<dbReference type="MetOSite" id="Q9SRY5"/>
<dbReference type="PaxDb" id="3702-AT1G02920.1"/>
<dbReference type="ProteomicsDB" id="230162"/>
<dbReference type="EnsemblPlants" id="AT1G02920.1">
    <property type="protein sequence ID" value="AT1G02920.1"/>
    <property type="gene ID" value="AT1G02920"/>
</dbReference>
<dbReference type="GeneID" id="839295"/>
<dbReference type="Gramene" id="AT1G02920.1">
    <property type="protein sequence ID" value="AT1G02920.1"/>
    <property type="gene ID" value="AT1G02920"/>
</dbReference>
<dbReference type="KEGG" id="ath:AT1G02920"/>
<dbReference type="Araport" id="AT1G02920"/>
<dbReference type="TAIR" id="AT1G02920">
    <property type="gene designation" value="GSTF7"/>
</dbReference>
<dbReference type="eggNOG" id="KOG0867">
    <property type="taxonomic scope" value="Eukaryota"/>
</dbReference>
<dbReference type="HOGENOM" id="CLU_011226_5_1_1"/>
<dbReference type="InParanoid" id="Q9SRY5"/>
<dbReference type="OMA" id="FNSRRVW"/>
<dbReference type="OrthoDB" id="422574at2759"/>
<dbReference type="PhylomeDB" id="Q9SRY5"/>
<dbReference type="BioCyc" id="ARA:AT1G02920-MONOMER"/>
<dbReference type="CD-CODE" id="4299E36E">
    <property type="entry name" value="Nucleolus"/>
</dbReference>
<dbReference type="PRO" id="PR:Q9SRY5"/>
<dbReference type="Proteomes" id="UP000006548">
    <property type="component" value="Chromosome 1"/>
</dbReference>
<dbReference type="ExpressionAtlas" id="Q9SRY5">
    <property type="expression patterns" value="baseline and differential"/>
</dbReference>
<dbReference type="GO" id="GO:0005737">
    <property type="term" value="C:cytoplasm"/>
    <property type="evidence" value="ECO:0007005"/>
    <property type="project" value="TAIR"/>
</dbReference>
<dbReference type="GO" id="GO:0005829">
    <property type="term" value="C:cytosol"/>
    <property type="evidence" value="ECO:0007005"/>
    <property type="project" value="TAIR"/>
</dbReference>
<dbReference type="GO" id="GO:0005576">
    <property type="term" value="C:extracellular region"/>
    <property type="evidence" value="ECO:0007005"/>
    <property type="project" value="TAIR"/>
</dbReference>
<dbReference type="GO" id="GO:0005634">
    <property type="term" value="C:nucleus"/>
    <property type="evidence" value="ECO:0007005"/>
    <property type="project" value="TAIR"/>
</dbReference>
<dbReference type="GO" id="GO:0000325">
    <property type="term" value="C:plant-type vacuole"/>
    <property type="evidence" value="ECO:0007005"/>
    <property type="project" value="TAIR"/>
</dbReference>
<dbReference type="GO" id="GO:0050897">
    <property type="term" value="F:cobalt ion binding"/>
    <property type="evidence" value="ECO:0007005"/>
    <property type="project" value="TAIR"/>
</dbReference>
<dbReference type="GO" id="GO:0005507">
    <property type="term" value="F:copper ion binding"/>
    <property type="evidence" value="ECO:0007005"/>
    <property type="project" value="TAIR"/>
</dbReference>
<dbReference type="GO" id="GO:0043295">
    <property type="term" value="F:glutathione binding"/>
    <property type="evidence" value="ECO:0000314"/>
    <property type="project" value="TAIR"/>
</dbReference>
<dbReference type="GO" id="GO:0004364">
    <property type="term" value="F:glutathione transferase activity"/>
    <property type="evidence" value="ECO:0007669"/>
    <property type="project" value="UniProtKB-EC"/>
</dbReference>
<dbReference type="GO" id="GO:0050832">
    <property type="term" value="P:defense response to fungus"/>
    <property type="evidence" value="ECO:0000314"/>
    <property type="project" value="TAIR"/>
</dbReference>
<dbReference type="GO" id="GO:0046686">
    <property type="term" value="P:response to cadmium ion"/>
    <property type="evidence" value="ECO:0000270"/>
    <property type="project" value="TAIR"/>
</dbReference>
<dbReference type="GO" id="GO:0009407">
    <property type="term" value="P:toxin catabolic process"/>
    <property type="evidence" value="ECO:0000304"/>
    <property type="project" value="TAIR"/>
</dbReference>
<dbReference type="CDD" id="cd03187">
    <property type="entry name" value="GST_C_Phi"/>
    <property type="match status" value="1"/>
</dbReference>
<dbReference type="CDD" id="cd03053">
    <property type="entry name" value="GST_N_Phi"/>
    <property type="match status" value="1"/>
</dbReference>
<dbReference type="FunFam" id="1.20.1050.10:FF:000004">
    <property type="entry name" value="Glutathione S-transferase F2"/>
    <property type="match status" value="1"/>
</dbReference>
<dbReference type="FunFam" id="3.40.30.10:FF:000016">
    <property type="entry name" value="Glutathione S-transferase F2"/>
    <property type="match status" value="1"/>
</dbReference>
<dbReference type="Gene3D" id="1.20.1050.10">
    <property type="match status" value="1"/>
</dbReference>
<dbReference type="Gene3D" id="3.40.30.10">
    <property type="entry name" value="Glutaredoxin"/>
    <property type="match status" value="1"/>
</dbReference>
<dbReference type="InterPro" id="IPR010987">
    <property type="entry name" value="Glutathione-S-Trfase_C-like"/>
</dbReference>
<dbReference type="InterPro" id="IPR036282">
    <property type="entry name" value="Glutathione-S-Trfase_C_sf"/>
</dbReference>
<dbReference type="InterPro" id="IPR040079">
    <property type="entry name" value="Glutathione_S-Trfase"/>
</dbReference>
<dbReference type="InterPro" id="IPR004045">
    <property type="entry name" value="Glutathione_S-Trfase_N"/>
</dbReference>
<dbReference type="InterPro" id="IPR004046">
    <property type="entry name" value="GST_C"/>
</dbReference>
<dbReference type="InterPro" id="IPR034347">
    <property type="entry name" value="GST_Phi_C"/>
</dbReference>
<dbReference type="InterPro" id="IPR036249">
    <property type="entry name" value="Thioredoxin-like_sf"/>
</dbReference>
<dbReference type="PANTHER" id="PTHR43900:SF47">
    <property type="entry name" value="GLUTATHIONE S-TRANSFERASE F6-RELATED"/>
    <property type="match status" value="1"/>
</dbReference>
<dbReference type="PANTHER" id="PTHR43900">
    <property type="entry name" value="GLUTATHIONE S-TRANSFERASE RHO"/>
    <property type="match status" value="1"/>
</dbReference>
<dbReference type="Pfam" id="PF00043">
    <property type="entry name" value="GST_C"/>
    <property type="match status" value="1"/>
</dbReference>
<dbReference type="Pfam" id="PF02798">
    <property type="entry name" value="GST_N"/>
    <property type="match status" value="1"/>
</dbReference>
<dbReference type="SFLD" id="SFLDS00019">
    <property type="entry name" value="Glutathione_Transferase_(cytos"/>
    <property type="match status" value="1"/>
</dbReference>
<dbReference type="SFLD" id="SFLDG01154">
    <property type="entry name" value="Main.5:_Phi-like"/>
    <property type="match status" value="1"/>
</dbReference>
<dbReference type="SUPFAM" id="SSF47616">
    <property type="entry name" value="GST C-terminal domain-like"/>
    <property type="match status" value="1"/>
</dbReference>
<dbReference type="SUPFAM" id="SSF52833">
    <property type="entry name" value="Thioredoxin-like"/>
    <property type="match status" value="1"/>
</dbReference>
<dbReference type="PROSITE" id="PS50405">
    <property type="entry name" value="GST_CTER"/>
    <property type="match status" value="1"/>
</dbReference>
<dbReference type="PROSITE" id="PS50404">
    <property type="entry name" value="GST_NTER"/>
    <property type="match status" value="1"/>
</dbReference>